<evidence type="ECO:0000255" key="1"/>
<evidence type="ECO:0000256" key="2">
    <source>
        <dbReference type="SAM" id="MobiDB-lite"/>
    </source>
</evidence>
<evidence type="ECO:0000269" key="3">
    <source>
    </source>
</evidence>
<evidence type="ECO:0000269" key="4">
    <source>
    </source>
</evidence>
<evidence type="ECO:0000269" key="5">
    <source>
    </source>
</evidence>
<evidence type="ECO:0000269" key="6">
    <source>
    </source>
</evidence>
<evidence type="ECO:0000269" key="7">
    <source>
    </source>
</evidence>
<evidence type="ECO:0000269" key="8">
    <source>
    </source>
</evidence>
<evidence type="ECO:0000269" key="9">
    <source>
    </source>
</evidence>
<evidence type="ECO:0000269" key="10">
    <source>
    </source>
</evidence>
<evidence type="ECO:0000269" key="11">
    <source>
    </source>
</evidence>
<evidence type="ECO:0000269" key="12">
    <source>
    </source>
</evidence>
<evidence type="ECO:0000269" key="13">
    <source>
    </source>
</evidence>
<evidence type="ECO:0000269" key="14">
    <source>
    </source>
</evidence>
<evidence type="ECO:0000303" key="15">
    <source>
    </source>
</evidence>
<evidence type="ECO:0000303" key="16">
    <source>
    </source>
</evidence>
<evidence type="ECO:0000303" key="17">
    <source>
    </source>
</evidence>
<evidence type="ECO:0000305" key="18"/>
<evidence type="ECO:0000305" key="19">
    <source>
    </source>
</evidence>
<evidence type="ECO:0000312" key="20">
    <source>
        <dbReference type="HGNC" id="HGNC:28486"/>
    </source>
</evidence>
<protein>
    <recommendedName>
        <fullName>Major facilitator superfamily domain-containing protein 8</fullName>
    </recommendedName>
    <alternativeName>
        <fullName>Ceroid-lipofuscinosis neuronal protein 7</fullName>
    </alternativeName>
</protein>
<name>MFSD8_HUMAN</name>
<comment type="function">
    <text evidence="14">Outward-rectifying chloride channel involved in endolysosomal chloride homeostasis, membrane fusion and function. Conducts chloride currents up to hundreds of picoamperes. Regulates lysosomal calcium content by reducing the lysosomal membrane potential, thereby activating TRPML1 channel and further release of lysosomal calcium ions. Regulates the pH in endolysosomal compartments and may contribute to progressive acidification from endosome to lysosome. Permeable to other halides such as iodide and fluoride ions.</text>
</comment>
<comment type="catalytic activity">
    <reaction evidence="14">
        <text>chloride(in) = chloride(out)</text>
        <dbReference type="Rhea" id="RHEA:29823"/>
        <dbReference type="ChEBI" id="CHEBI:17996"/>
    </reaction>
    <physiologicalReaction direction="right-to-left" evidence="19">
        <dbReference type="Rhea" id="RHEA:29825"/>
    </physiologicalReaction>
</comment>
<comment type="catalytic activity">
    <reaction evidence="14">
        <text>iodide(out) = iodide(in)</text>
        <dbReference type="Rhea" id="RHEA:66324"/>
        <dbReference type="ChEBI" id="CHEBI:16382"/>
    </reaction>
    <physiologicalReaction direction="left-to-right" evidence="19">
        <dbReference type="Rhea" id="RHEA:66325"/>
    </physiologicalReaction>
</comment>
<comment type="catalytic activity">
    <reaction evidence="14">
        <text>fluoride(in) = fluoride(out)</text>
        <dbReference type="Rhea" id="RHEA:76159"/>
        <dbReference type="ChEBI" id="CHEBI:17051"/>
    </reaction>
    <physiologicalReaction direction="right-to-left" evidence="19">
        <dbReference type="Rhea" id="RHEA:76161"/>
    </physiologicalReaction>
</comment>
<comment type="activity regulation">
    <text evidence="14">Inhibited by chloride channel blockers 4,4'-diisothiocyano-2,2'-stilbenedisulfonate (DIDS), niflumic acid (NFA), and 5-Nitro-2-(3-phenylpropylamino) benzoic acid (NPPB).</text>
</comment>
<comment type="subcellular location">
    <subcellularLocation>
        <location evidence="14">Endosome membrane</location>
        <topology evidence="1">Multi-pass membrane protein</topology>
    </subcellularLocation>
    <subcellularLocation>
        <location evidence="4 5 10 14">Lysosome membrane</location>
        <topology evidence="1">Multi-pass membrane protein</topology>
    </subcellularLocation>
    <text>Sorting to lysosomes involves dileucine-based motif.</text>
</comment>
<comment type="alternative products">
    <event type="alternative splicing"/>
    <isoform>
        <id>Q8NHS3-1</id>
        <name>1</name>
        <sequence type="displayed"/>
    </isoform>
    <isoform>
        <id>Q8NHS3-2</id>
        <name>2</name>
        <sequence type="described" ref="VSP_057054 VSP_057055 VSP_057056 VSP_057057"/>
    </isoform>
</comment>
<comment type="tissue specificity">
    <text evidence="4">Expressed at very low levels in all tissues tested.</text>
</comment>
<comment type="disease" evidence="4 6 7 8 9 11 12 14">
    <disease id="DI-00815">
        <name>Ceroid lipofuscinosis, neuronal, 7</name>
        <acronym>CLN7</acronym>
        <description>A form of neuronal ceroid lipofuscinosis with onset in early childhood. Neuronal ceroid lipofuscinoses are progressive neurodegenerative, lysosomal storage diseases characterized by intracellular accumulation of autofluorescent liposomal material, and clinically by seizures, dementia, visual loss, and/or cerebral atrophy. The lipopigment patterns observed most often in neuronal ceroid lipofuscinosis type 7 comprise mixed combinations of granular, curvilinear, fingerprint, and rectilinear profiles.</description>
        <dbReference type="MIM" id="610951"/>
    </disease>
    <text>The disease is caused by variants affecting the gene represented in this entry.</text>
</comment>
<comment type="disease" evidence="13">
    <disease id="DI-04295">
        <name>Macular dystrophy with central cone involvement</name>
        <acronym>CCMD</acronym>
        <description>An ocular disease characterized by decreased visual acuity, slight pigmentary changes and color vision abnormalities, becoming apparent in the third to sixth decade of life. Fundus anomalies are variable and include bull's eye maculopathy, severe atrophy of central fovea, relatively spared fovea with surrounding atrophic ring, central retinal pigment epithelium and/or choroid changes, pale or atrophic peripapillary area, pale optic disk, relatively spared periphery, and slightly or moderately attenuated vessels.</description>
        <dbReference type="MIM" id="616170"/>
    </disease>
    <text>The disease is caused by variants affecting the gene represented in this entry.</text>
</comment>
<comment type="miscellaneous">
    <molecule>Isoform 2</molecule>
    <text evidence="18">May be produced at very low levels due to a premature stop codon in the mRNA, leading to nonsense-mediated mRNA decay.</text>
</comment>
<comment type="similarity">
    <text evidence="18">Belongs to the major facilitator superfamily.</text>
</comment>
<comment type="online information" name="NCL CLN7/MFSD8">
    <link uri="https://www.ucl.ac.uk/ncl-disease/ncl-resource-gateway-batten-disease"/>
    <text>Neural Ceroid Lipofuscinoses mutation db</text>
</comment>
<accession>Q8NHS3</accession>
<accession>B2RDM1</accession>
<accession>B7Z205</accession>
<accession>Q8N2P3</accession>
<dbReference type="EMBL" id="AK074564">
    <property type="protein sequence ID" value="BAC11062.1"/>
    <property type="molecule type" value="mRNA"/>
</dbReference>
<dbReference type="EMBL" id="AK294184">
    <property type="protein sequence ID" value="BAH11691.1"/>
    <property type="molecule type" value="mRNA"/>
</dbReference>
<dbReference type="EMBL" id="AK315596">
    <property type="protein sequence ID" value="BAG37968.1"/>
    <property type="molecule type" value="mRNA"/>
</dbReference>
<dbReference type="EMBL" id="AC099340">
    <property type="status" value="NOT_ANNOTATED_CDS"/>
    <property type="molecule type" value="Genomic_DNA"/>
</dbReference>
<dbReference type="EMBL" id="CH471056">
    <property type="protein sequence ID" value="EAX05195.1"/>
    <property type="molecule type" value="Genomic_DNA"/>
</dbReference>
<dbReference type="EMBL" id="BC029503">
    <property type="protein sequence ID" value="AAH29503.1"/>
    <property type="molecule type" value="mRNA"/>
</dbReference>
<dbReference type="CCDS" id="CCDS3736.1">
    <molecule id="Q8NHS3-1"/>
</dbReference>
<dbReference type="RefSeq" id="NP_001358525.1">
    <molecule id="Q8NHS3-1"/>
    <property type="nucleotide sequence ID" value="NM_001371596.2"/>
</dbReference>
<dbReference type="RefSeq" id="NP_689991.1">
    <molecule id="Q8NHS3-1"/>
    <property type="nucleotide sequence ID" value="NM_152778.4"/>
</dbReference>
<dbReference type="RefSeq" id="XP_005262950.1">
    <property type="nucleotide sequence ID" value="XM_005262893.1"/>
</dbReference>
<dbReference type="SMR" id="Q8NHS3"/>
<dbReference type="BioGRID" id="129168">
    <property type="interactions" value="68"/>
</dbReference>
<dbReference type="FunCoup" id="Q8NHS3">
    <property type="interactions" value="1019"/>
</dbReference>
<dbReference type="IntAct" id="Q8NHS3">
    <property type="interactions" value="56"/>
</dbReference>
<dbReference type="STRING" id="9606.ENSP00000493218"/>
<dbReference type="TCDB" id="2.A.1.2.56">
    <property type="family name" value="the major facilitator superfamily (mfs)"/>
</dbReference>
<dbReference type="GlyCosmos" id="Q8NHS3">
    <property type="glycosylation" value="2 sites, No reported glycans"/>
</dbReference>
<dbReference type="GlyGen" id="Q8NHS3">
    <property type="glycosylation" value="4 sites, 1 N-linked glycan (1 site), 1 O-linked glycan (1 site)"/>
</dbReference>
<dbReference type="iPTMnet" id="Q8NHS3"/>
<dbReference type="PhosphoSitePlus" id="Q8NHS3"/>
<dbReference type="BioMuta" id="MFSD8"/>
<dbReference type="DMDM" id="74730313"/>
<dbReference type="jPOST" id="Q8NHS3"/>
<dbReference type="MassIVE" id="Q8NHS3"/>
<dbReference type="PaxDb" id="9606-ENSP00000296468"/>
<dbReference type="PeptideAtlas" id="Q8NHS3"/>
<dbReference type="ProteomicsDB" id="73747">
    <molecule id="Q8NHS3-1"/>
</dbReference>
<dbReference type="Pumba" id="Q8NHS3"/>
<dbReference type="Antibodypedia" id="45354">
    <property type="antibodies" value="58 antibodies from 20 providers"/>
</dbReference>
<dbReference type="DNASU" id="256471"/>
<dbReference type="Ensembl" id="ENST00000296468.8">
    <molecule id="Q8NHS3-1"/>
    <property type="protein sequence ID" value="ENSP00000296468.3"/>
    <property type="gene ID" value="ENSG00000164073.11"/>
</dbReference>
<dbReference type="Ensembl" id="ENST00000641434.1">
    <molecule id="Q8NHS3-1"/>
    <property type="protein sequence ID" value="ENSP00000493279.1"/>
    <property type="gene ID" value="ENSG00000164073.11"/>
</dbReference>
<dbReference type="Ensembl" id="ENST00000641464.1">
    <molecule id="Q8NHS3-2"/>
    <property type="protein sequence ID" value="ENSP00000493438.1"/>
    <property type="gene ID" value="ENSG00000164073.11"/>
</dbReference>
<dbReference type="Ensembl" id="ENST00000641686.2">
    <molecule id="Q8NHS3-1"/>
    <property type="protein sequence ID" value="ENSP00000493218.2"/>
    <property type="gene ID" value="ENSG00000164073.11"/>
</dbReference>
<dbReference type="Ensembl" id="ENST00000641748.1">
    <molecule id="Q8NHS3-1"/>
    <property type="protein sequence ID" value="ENSP00000493330.1"/>
    <property type="gene ID" value="ENSG00000164073.11"/>
</dbReference>
<dbReference type="Ensembl" id="ENST00000641928.1">
    <molecule id="Q8NHS3-2"/>
    <property type="protein sequence ID" value="ENSP00000493418.1"/>
    <property type="gene ID" value="ENSG00000164073.11"/>
</dbReference>
<dbReference type="GeneID" id="256471"/>
<dbReference type="KEGG" id="hsa:256471"/>
<dbReference type="MANE-Select" id="ENST00000641686.2">
    <property type="protein sequence ID" value="ENSP00000493218.2"/>
    <property type="RefSeq nucleotide sequence ID" value="NM_001371596.2"/>
    <property type="RefSeq protein sequence ID" value="NP_001358525.1"/>
</dbReference>
<dbReference type="UCSC" id="uc003ifp.4">
    <molecule id="Q8NHS3-1"/>
    <property type="organism name" value="human"/>
</dbReference>
<dbReference type="AGR" id="HGNC:28486"/>
<dbReference type="CTD" id="256471"/>
<dbReference type="DisGeNET" id="256471"/>
<dbReference type="GeneCards" id="MFSD8"/>
<dbReference type="HGNC" id="HGNC:28486">
    <property type="gene designation" value="MFSD8"/>
</dbReference>
<dbReference type="HPA" id="ENSG00000164073">
    <property type="expression patterns" value="Low tissue specificity"/>
</dbReference>
<dbReference type="MalaCards" id="MFSD8"/>
<dbReference type="MIM" id="610951">
    <property type="type" value="phenotype"/>
</dbReference>
<dbReference type="MIM" id="611124">
    <property type="type" value="gene"/>
</dbReference>
<dbReference type="MIM" id="616170">
    <property type="type" value="phenotype"/>
</dbReference>
<dbReference type="neXtProt" id="NX_Q8NHS3"/>
<dbReference type="OpenTargets" id="ENSG00000164073"/>
<dbReference type="Orphanet" id="228366">
    <property type="disease" value="CLN7 disease"/>
</dbReference>
<dbReference type="PharmGKB" id="PA162395842"/>
<dbReference type="VEuPathDB" id="HostDB:ENSG00000164073"/>
<dbReference type="eggNOG" id="KOG2325">
    <property type="taxonomic scope" value="Eukaryota"/>
</dbReference>
<dbReference type="GeneTree" id="ENSGT00530000063854"/>
<dbReference type="HOGENOM" id="CLU_1712618_0_0_1"/>
<dbReference type="InParanoid" id="Q8NHS3"/>
<dbReference type="OMA" id="WINVIMG"/>
<dbReference type="OrthoDB" id="370281at2759"/>
<dbReference type="PAN-GO" id="Q8NHS3">
    <property type="GO annotations" value="2 GO annotations based on evolutionary models"/>
</dbReference>
<dbReference type="PhylomeDB" id="Q8NHS3"/>
<dbReference type="TreeFam" id="TF316590"/>
<dbReference type="PathwayCommons" id="Q8NHS3"/>
<dbReference type="SignaLink" id="Q8NHS3"/>
<dbReference type="BioGRID-ORCS" id="256471">
    <property type="hits" value="14 hits in 1164 CRISPR screens"/>
</dbReference>
<dbReference type="ChiTaRS" id="MFSD8">
    <property type="organism name" value="human"/>
</dbReference>
<dbReference type="GeneWiki" id="MFSD8"/>
<dbReference type="GenomeRNAi" id="256471"/>
<dbReference type="Pharos" id="Q8NHS3">
    <property type="development level" value="Tbio"/>
</dbReference>
<dbReference type="PRO" id="PR:Q8NHS3"/>
<dbReference type="Proteomes" id="UP000005640">
    <property type="component" value="Chromosome 4"/>
</dbReference>
<dbReference type="RNAct" id="Q8NHS3">
    <property type="molecule type" value="protein"/>
</dbReference>
<dbReference type="Bgee" id="ENSG00000164073">
    <property type="expression patterns" value="Expressed in oviduct epithelium and 176 other cell types or tissues"/>
</dbReference>
<dbReference type="ExpressionAtlas" id="Q8NHS3">
    <property type="expression patterns" value="baseline and differential"/>
</dbReference>
<dbReference type="GO" id="GO:0034707">
    <property type="term" value="C:chloride channel complex"/>
    <property type="evidence" value="ECO:0007669"/>
    <property type="project" value="UniProtKB-KW"/>
</dbReference>
<dbReference type="GO" id="GO:0010008">
    <property type="term" value="C:endosome membrane"/>
    <property type="evidence" value="ECO:0000314"/>
    <property type="project" value="UniProtKB"/>
</dbReference>
<dbReference type="GO" id="GO:0005765">
    <property type="term" value="C:lysosomal membrane"/>
    <property type="evidence" value="ECO:0000314"/>
    <property type="project" value="UniProtKB"/>
</dbReference>
<dbReference type="GO" id="GO:0005739">
    <property type="term" value="C:mitochondrion"/>
    <property type="evidence" value="ECO:0007669"/>
    <property type="project" value="Ensembl"/>
</dbReference>
<dbReference type="GO" id="GO:0005254">
    <property type="term" value="F:chloride channel activity"/>
    <property type="evidence" value="ECO:0000314"/>
    <property type="project" value="UniProtKB"/>
</dbReference>
<dbReference type="GO" id="GO:0062054">
    <property type="term" value="F:fluoride channel activity"/>
    <property type="evidence" value="ECO:0000314"/>
    <property type="project" value="UniProtKB"/>
</dbReference>
<dbReference type="GO" id="GO:0015111">
    <property type="term" value="F:iodide transmembrane transporter activity"/>
    <property type="evidence" value="ECO:0000314"/>
    <property type="project" value="UniProtKB"/>
</dbReference>
<dbReference type="GO" id="GO:0048708">
    <property type="term" value="P:astrocyte differentiation"/>
    <property type="evidence" value="ECO:0007669"/>
    <property type="project" value="Ensembl"/>
</dbReference>
<dbReference type="GO" id="GO:0097352">
    <property type="term" value="P:autophagosome maturation"/>
    <property type="evidence" value="ECO:0000318"/>
    <property type="project" value="GO_Central"/>
</dbReference>
<dbReference type="GO" id="GO:0045333">
    <property type="term" value="P:cellular respiration"/>
    <property type="evidence" value="ECO:0007669"/>
    <property type="project" value="Ensembl"/>
</dbReference>
<dbReference type="GO" id="GO:0008340">
    <property type="term" value="P:determination of adult lifespan"/>
    <property type="evidence" value="ECO:0007669"/>
    <property type="project" value="Ensembl"/>
</dbReference>
<dbReference type="GO" id="GO:0010467">
    <property type="term" value="P:gene expression"/>
    <property type="evidence" value="ECO:0007669"/>
    <property type="project" value="Ensembl"/>
</dbReference>
<dbReference type="GO" id="GO:0006664">
    <property type="term" value="P:glycolipid metabolic process"/>
    <property type="evidence" value="ECO:0007669"/>
    <property type="project" value="Ensembl"/>
</dbReference>
<dbReference type="GO" id="GO:0006096">
    <property type="term" value="P:glycolytic process"/>
    <property type="evidence" value="ECO:0007669"/>
    <property type="project" value="Ensembl"/>
</dbReference>
<dbReference type="GO" id="GO:0009100">
    <property type="term" value="P:glycoprotein metabolic process"/>
    <property type="evidence" value="ECO:0007669"/>
    <property type="project" value="Ensembl"/>
</dbReference>
<dbReference type="GO" id="GO:0070841">
    <property type="term" value="P:inclusion body assembly"/>
    <property type="evidence" value="ECO:0007669"/>
    <property type="project" value="Ensembl"/>
</dbReference>
<dbReference type="GO" id="GO:1905146">
    <property type="term" value="P:lysosomal protein catabolic process"/>
    <property type="evidence" value="ECO:0007669"/>
    <property type="project" value="Ensembl"/>
</dbReference>
<dbReference type="GO" id="GO:0007040">
    <property type="term" value="P:lysosome organization"/>
    <property type="evidence" value="ECO:0000318"/>
    <property type="project" value="GO_Central"/>
</dbReference>
<dbReference type="GO" id="GO:0051235">
    <property type="term" value="P:maintenance of location"/>
    <property type="evidence" value="ECO:0007669"/>
    <property type="project" value="Ensembl"/>
</dbReference>
<dbReference type="GO" id="GO:0014004">
    <property type="term" value="P:microglia differentiation"/>
    <property type="evidence" value="ECO:0007669"/>
    <property type="project" value="Ensembl"/>
</dbReference>
<dbReference type="GO" id="GO:0007005">
    <property type="term" value="P:mitochondrion organization"/>
    <property type="evidence" value="ECO:0007669"/>
    <property type="project" value="Ensembl"/>
</dbReference>
<dbReference type="GO" id="GO:0061744">
    <property type="term" value="P:motor behavior"/>
    <property type="evidence" value="ECO:0007669"/>
    <property type="project" value="Ensembl"/>
</dbReference>
<dbReference type="GO" id="GO:0035264">
    <property type="term" value="P:multicellular organism growth"/>
    <property type="evidence" value="ECO:0007669"/>
    <property type="project" value="Ensembl"/>
</dbReference>
<dbReference type="GO" id="GO:0043524">
    <property type="term" value="P:negative regulation of neuron apoptotic process"/>
    <property type="evidence" value="ECO:0007669"/>
    <property type="project" value="Ensembl"/>
</dbReference>
<dbReference type="GO" id="GO:0050905">
    <property type="term" value="P:neuromuscular process"/>
    <property type="evidence" value="ECO:0007669"/>
    <property type="project" value="Ensembl"/>
</dbReference>
<dbReference type="GO" id="GO:0051402">
    <property type="term" value="P:neuron apoptotic process"/>
    <property type="evidence" value="ECO:0007669"/>
    <property type="project" value="Ensembl"/>
</dbReference>
<dbReference type="GO" id="GO:0048666">
    <property type="term" value="P:neuron development"/>
    <property type="evidence" value="ECO:0007669"/>
    <property type="project" value="Ensembl"/>
</dbReference>
<dbReference type="GO" id="GO:0050821">
    <property type="term" value="P:protein stabilization"/>
    <property type="evidence" value="ECO:0007669"/>
    <property type="project" value="Ensembl"/>
</dbReference>
<dbReference type="GO" id="GO:0072593">
    <property type="term" value="P:reactive oxygen species metabolic process"/>
    <property type="evidence" value="ECO:0007669"/>
    <property type="project" value="Ensembl"/>
</dbReference>
<dbReference type="GO" id="GO:0010506">
    <property type="term" value="P:regulation of autophagy"/>
    <property type="evidence" value="ECO:0007669"/>
    <property type="project" value="Ensembl"/>
</dbReference>
<dbReference type="GO" id="GO:1905165">
    <property type="term" value="P:regulation of lysosomal protein catabolic process"/>
    <property type="evidence" value="ECO:0007669"/>
    <property type="project" value="Ensembl"/>
</dbReference>
<dbReference type="GO" id="GO:0060041">
    <property type="term" value="P:retina development in camera-type eye"/>
    <property type="evidence" value="ECO:0007669"/>
    <property type="project" value="Ensembl"/>
</dbReference>
<dbReference type="GO" id="GO:0038202">
    <property type="term" value="P:TORC1 signaling"/>
    <property type="evidence" value="ECO:0007669"/>
    <property type="project" value="Ensembl"/>
</dbReference>
<dbReference type="CDD" id="cd17326">
    <property type="entry name" value="MFS_MFSD8"/>
    <property type="match status" value="1"/>
</dbReference>
<dbReference type="Gene3D" id="1.20.1250.20">
    <property type="entry name" value="MFS general substrate transporter like domains"/>
    <property type="match status" value="1"/>
</dbReference>
<dbReference type="InterPro" id="IPR011701">
    <property type="entry name" value="MFS"/>
</dbReference>
<dbReference type="InterPro" id="IPR020846">
    <property type="entry name" value="MFS_dom"/>
</dbReference>
<dbReference type="InterPro" id="IPR051068">
    <property type="entry name" value="MFS_Domain-Containing_Protein"/>
</dbReference>
<dbReference type="InterPro" id="IPR036259">
    <property type="entry name" value="MFS_trans_sf"/>
</dbReference>
<dbReference type="PANTHER" id="PTHR23510">
    <property type="entry name" value="INNER MEMBRANE TRANSPORT PROTEIN YAJR"/>
    <property type="match status" value="1"/>
</dbReference>
<dbReference type="PANTHER" id="PTHR23510:SF3">
    <property type="entry name" value="MAJOR FACILITATOR SUPERFAMILY DOMAIN-CONTAINING PROTEIN 8"/>
    <property type="match status" value="1"/>
</dbReference>
<dbReference type="Pfam" id="PF07690">
    <property type="entry name" value="MFS_1"/>
    <property type="match status" value="1"/>
</dbReference>
<dbReference type="SUPFAM" id="SSF103473">
    <property type="entry name" value="MFS general substrate transporter"/>
    <property type="match status" value="1"/>
</dbReference>
<dbReference type="PROSITE" id="PS50850">
    <property type="entry name" value="MFS"/>
    <property type="match status" value="1"/>
</dbReference>
<proteinExistence type="evidence at protein level"/>
<feature type="chain" id="PRO_0000311232" description="Major facilitator superfamily domain-containing protein 8">
    <location>
        <begin position="1"/>
        <end position="518"/>
    </location>
</feature>
<feature type="topological domain" description="Cytoplasmic" evidence="1 19">
    <location>
        <begin position="1"/>
        <end position="40"/>
    </location>
</feature>
<feature type="transmembrane region" description="Helical" evidence="1">
    <location>
        <begin position="41"/>
        <end position="61"/>
    </location>
</feature>
<feature type="topological domain" description="Extracellular" evidence="1">
    <location>
        <begin position="62"/>
        <end position="74"/>
    </location>
</feature>
<feature type="transmembrane region" description="Helical" evidence="1">
    <location>
        <begin position="75"/>
        <end position="95"/>
    </location>
</feature>
<feature type="topological domain" description="Cytoplasmic" evidence="1">
    <location>
        <begin position="96"/>
        <end position="105"/>
    </location>
</feature>
<feature type="transmembrane region" description="Helical" evidence="1">
    <location>
        <begin position="106"/>
        <end position="126"/>
    </location>
</feature>
<feature type="topological domain" description="Extracellular" evidence="1">
    <location>
        <begin position="127"/>
        <end position="131"/>
    </location>
</feature>
<feature type="transmembrane region" description="Helical" evidence="1">
    <location>
        <begin position="132"/>
        <end position="152"/>
    </location>
</feature>
<feature type="topological domain" description="Cytoplasmic" evidence="1">
    <location>
        <begin position="153"/>
        <end position="173"/>
    </location>
</feature>
<feature type="transmembrane region" description="Helical" evidence="1">
    <location>
        <begin position="174"/>
        <end position="194"/>
    </location>
</feature>
<feature type="topological domain" description="Extracellular" evidence="1">
    <location>
        <begin position="195"/>
        <end position="211"/>
    </location>
</feature>
<feature type="transmembrane region" description="Helical" evidence="1">
    <location>
        <begin position="212"/>
        <end position="232"/>
    </location>
</feature>
<feature type="topological domain" description="Cytoplasmic" evidence="1">
    <location>
        <begin position="233"/>
        <end position="266"/>
    </location>
</feature>
<feature type="transmembrane region" description="Helical" evidence="1">
    <location>
        <begin position="267"/>
        <end position="287"/>
    </location>
</feature>
<feature type="topological domain" description="Extracellular" evidence="1">
    <location>
        <begin position="288"/>
        <end position="304"/>
    </location>
</feature>
<feature type="transmembrane region" description="Helical" evidence="1">
    <location>
        <begin position="305"/>
        <end position="325"/>
    </location>
</feature>
<feature type="topological domain" description="Cytoplasmic" evidence="1">
    <location>
        <begin position="326"/>
        <end position="337"/>
    </location>
</feature>
<feature type="transmembrane region" description="Helical" evidence="1">
    <location>
        <begin position="338"/>
        <end position="358"/>
    </location>
</feature>
<feature type="topological domain" description="Extracellular" evidence="1">
    <location>
        <begin position="359"/>
        <end position="412"/>
    </location>
</feature>
<feature type="transmembrane region" description="Helical" evidence="1">
    <location>
        <begin position="413"/>
        <end position="433"/>
    </location>
</feature>
<feature type="topological domain" description="Cytoplasmic" evidence="1">
    <location>
        <begin position="434"/>
        <end position="451"/>
    </location>
</feature>
<feature type="transmembrane region" description="Helical" evidence="1">
    <location>
        <begin position="452"/>
        <end position="472"/>
    </location>
</feature>
<feature type="topological domain" description="Extracellular" evidence="1">
    <location>
        <begin position="473"/>
        <end position="482"/>
    </location>
</feature>
<feature type="transmembrane region" description="Helical" evidence="1">
    <location>
        <begin position="483"/>
        <end position="503"/>
    </location>
</feature>
<feature type="topological domain" description="Cytoplasmic" evidence="1 19">
    <location>
        <begin position="504"/>
        <end position="518"/>
    </location>
</feature>
<feature type="region of interest" description="Disordered" evidence="2">
    <location>
        <begin position="1"/>
        <end position="20"/>
    </location>
</feature>
<feature type="short sequence motif" description="Dileucine internalization motif" evidence="14">
    <location>
        <begin position="13"/>
        <end position="14"/>
    </location>
</feature>
<feature type="glycosylation site" description="N-linked (GlcNAc...) asparagine" evidence="10">
    <location>
        <position position="371"/>
    </location>
</feature>
<feature type="glycosylation site" description="N-linked (GlcNAc...) asparagine" evidence="10">
    <location>
        <position position="376"/>
    </location>
</feature>
<feature type="splice variant" id="VSP_057054" description="In isoform 2." evidence="15">
    <location>
        <begin position="1"/>
        <end position="45"/>
    </location>
</feature>
<feature type="splice variant" id="VSP_057055" description="In isoform 2." evidence="15">
    <location>
        <begin position="147"/>
        <end position="184"/>
    </location>
</feature>
<feature type="splice variant" id="VSP_057056" description="In isoform 2." evidence="15">
    <original>REHR</original>
    <variation>SKYR</variation>
    <location>
        <begin position="233"/>
        <end position="236"/>
    </location>
</feature>
<feature type="splice variant" id="VSP_057057" description="In isoform 2." evidence="15">
    <location>
        <begin position="237"/>
        <end position="518"/>
    </location>
</feature>
<feature type="sequence variant" id="VAR_058427" description="In CLN7; dbSNP:rs779838200." evidence="7">
    <original>G</original>
    <variation>R</variation>
    <location>
        <position position="52"/>
    </location>
</feature>
<feature type="sequence variant" id="VAR_037176" description="In dbSNP:rs11732377.">
    <original>V</original>
    <variation>G</variation>
    <location>
        <position position="109"/>
    </location>
</feature>
<feature type="sequence variant" id="VAR_058428" description="In CLN7; dbSNP:rs118203978." evidence="6">
    <original>Y</original>
    <variation>C</variation>
    <location>
        <position position="121"/>
    </location>
</feature>
<feature type="sequence variant" id="VAR_058429" description="In CLN7; dbSNP:rs749704755." evidence="8">
    <original>R</original>
    <variation>H</variation>
    <location>
        <position position="139"/>
    </location>
</feature>
<feature type="sequence variant" id="VAR_058430" description="In CLN7; due to a deletion-insertion mutation at nucleotide level; endolysosomal localization; decreased chloride channel activity." evidence="8 11 14">
    <original>A</original>
    <variation>P</variation>
    <location>
        <position position="157"/>
    </location>
</feature>
<feature type="sequence variant" id="VAR_066915" description="In CLN7; dbSNP:rs1162750836." evidence="11">
    <original>T</original>
    <variation>I</variation>
    <location>
        <position position="160"/>
    </location>
</feature>
<feature type="sequence variant" id="VAR_066916" description="In CLN7." evidence="11">
    <original>T</original>
    <variation>N</variation>
    <location>
        <position position="160"/>
    </location>
</feature>
<feature type="sequence variant" id="VAR_058431" description="In CLN7; endolysosomal localization; decreased chloride channel activity; dbSNP:rs140948465." evidence="7 8 12 14">
    <original>T</original>
    <variation>K</variation>
    <location>
        <position position="294"/>
    </location>
</feature>
<feature type="sequence variant" id="VAR_037177" description="In CLN7; lysosomal localization; dbSNP:rs118203975." evidence="4 7 8">
    <original>G</original>
    <variation>D</variation>
    <location>
        <position position="310"/>
    </location>
</feature>
<feature type="sequence variant" id="VAR_072673" description="In CCMD and CLN7; endolysosomal localization; decreased chloride channel activity; dbSNP:rs150418024." evidence="13 14">
    <original>E</original>
    <variation>Q</variation>
    <location>
        <position position="336"/>
    </location>
</feature>
<feature type="sequence variant" id="VAR_037178" description="In dbSNP:rs11098943.">
    <original>G</original>
    <variation>R</variation>
    <location>
        <position position="385"/>
    </location>
</feature>
<feature type="sequence variant" id="VAR_072674" description="In CLN7; dbSNP:rs267607235." evidence="9">
    <original>P</original>
    <variation>L</variation>
    <location>
        <position position="412"/>
    </location>
</feature>
<feature type="sequence variant" id="VAR_037179" description="In dbSNP:rs3733319." evidence="3">
    <original>A</original>
    <variation>V</variation>
    <location>
        <position position="423"/>
    </location>
</feature>
<feature type="sequence variant" id="VAR_037180" description="In CLN7; lysosomal localization; dbSNP:rs118203976." evidence="4">
    <original>G</original>
    <variation>D</variation>
    <location>
        <position position="429"/>
    </location>
</feature>
<feature type="sequence variant" id="VAR_058432" description="In CLN7." evidence="7">
    <original>P</original>
    <variation>L</variation>
    <location>
        <position position="447"/>
    </location>
</feature>
<feature type="sequence variant" id="VAR_066917" description="In CLN7." evidence="11">
    <original>T</original>
    <variation>K</variation>
    <location>
        <position position="458"/>
    </location>
</feature>
<feature type="sequence variant" id="VAR_066918" description="In CLN7; decreased chloride channel activity; dbSNP:rs1275962600." evidence="11 14">
    <original>R</original>
    <variation>Q</variation>
    <location>
        <position position="465"/>
    </location>
</feature>
<feature type="sequence variant" id="VAR_058433" description="In CLN7; decreased chloride channel activity; dbSNP:rs1043984708." evidence="8 14">
    <original>R</original>
    <variation>W</variation>
    <location>
        <position position="465"/>
    </location>
</feature>
<feature type="sequence variant" id="VAR_066919" description="In CLN7; dbSNP:rs764549054." evidence="11">
    <original>M</original>
    <variation>V</variation>
    <location>
        <position position="470"/>
    </location>
</feature>
<feature type="mutagenesis site" description="Mistargeted to the plasma membrane." evidence="14">
    <original>LL</original>
    <variation>A</variation>
    <location>
        <begin position="13"/>
        <end position="14"/>
    </location>
</feature>
<feature type="mutagenesis site" description="Decreased chloride channel activity." evidence="14">
    <original>R</original>
    <variation>A</variation>
    <location>
        <position position="153"/>
    </location>
</feature>
<feature type="mutagenesis site" description="Decreased chloride channel activity." evidence="14">
    <original>E</original>
    <variation>A</variation>
    <location>
        <position position="287"/>
    </location>
</feature>
<feature type="mutagenesis site" description="Decreased chloride channel activity." evidence="14">
    <original>Y</original>
    <variation>A</variation>
    <location>
        <position position="438"/>
    </location>
</feature>
<feature type="sequence conflict" description="In Ref. 1; BAC11062." evidence="18" ref="1">
    <original>C</original>
    <variation>Y</variation>
    <location>
        <position position="189"/>
    </location>
</feature>
<feature type="sequence conflict" description="In Ref. 1; BAC11062." evidence="18" ref="1">
    <original>L</original>
    <variation>R</variation>
    <location>
        <position position="487"/>
    </location>
</feature>
<keyword id="KW-0025">Alternative splicing</keyword>
<keyword id="KW-0868">Chloride</keyword>
<keyword id="KW-0869">Chloride channel</keyword>
<keyword id="KW-0225">Disease variant</keyword>
<keyword id="KW-0967">Endosome</keyword>
<keyword id="KW-0325">Glycoprotein</keyword>
<keyword id="KW-0407">Ion channel</keyword>
<keyword id="KW-0406">Ion transport</keyword>
<keyword id="KW-0458">Lysosome</keyword>
<keyword id="KW-0472">Membrane</keyword>
<keyword id="KW-0523">Neurodegeneration</keyword>
<keyword id="KW-0525">Neuronal ceroid lipofuscinosis</keyword>
<keyword id="KW-1267">Proteomics identification</keyword>
<keyword id="KW-1185">Reference proteome</keyword>
<keyword id="KW-0812">Transmembrane</keyword>
<keyword id="KW-1133">Transmembrane helix</keyword>
<keyword id="KW-0813">Transport</keyword>
<organism>
    <name type="scientific">Homo sapiens</name>
    <name type="common">Human</name>
    <dbReference type="NCBI Taxonomy" id="9606"/>
    <lineage>
        <taxon>Eukaryota</taxon>
        <taxon>Metazoa</taxon>
        <taxon>Chordata</taxon>
        <taxon>Craniata</taxon>
        <taxon>Vertebrata</taxon>
        <taxon>Euteleostomi</taxon>
        <taxon>Mammalia</taxon>
        <taxon>Eutheria</taxon>
        <taxon>Euarchontoglires</taxon>
        <taxon>Primates</taxon>
        <taxon>Haplorrhini</taxon>
        <taxon>Catarrhini</taxon>
        <taxon>Hominidae</taxon>
        <taxon>Homo</taxon>
    </lineage>
</organism>
<sequence>MAGLRNESEQEPLLGDTPGSREWDILETEEHYKSRWRSIRILYLTMFLSSVGFSVVMMSIWPYLQKIDPTADTSFLGWVIASYSLGQMVASPIFGLWSNYRPRKEPLIVSILISVAANCLYAYLHIPASHNKYYMLVARGLLGIGAGNVAVVRSYTAGATSLQERTSSMANISMCQALGFILGPVFQTCFTFLGEKGVTWDVIKLQINMYTTPVLLSAFLGILNIILILAILREHRVDDSGRQCKSINFEEASTDEAQVPQGNIDQVAVVAINVLFFVTLFIFALFETIITPLTMDMYAWTQEQAVLYNGIILAALGVEAVVIFLGVKLLSKKIGERAILLGGLIVVWVGFFILLPWGNQFPKIQWEDLHNNSIPNTTFGEIIIGLWKSPMEDDNERPTGCSIEQAWCLYTPVIHLAQFLTSAVLIGLGYPVCNLMSYTLYSKILGPKPQGVYMGWLTASGSGARILGPMFISQVYAHWGPRWAFSLVCGIIVLTITLLGVVYKRLIALSVRYGRIQE</sequence>
<reference key="1">
    <citation type="journal article" date="2004" name="Nat. Genet.">
        <title>Complete sequencing and characterization of 21,243 full-length human cDNAs.</title>
        <authorList>
            <person name="Ota T."/>
            <person name="Suzuki Y."/>
            <person name="Nishikawa T."/>
            <person name="Otsuki T."/>
            <person name="Sugiyama T."/>
            <person name="Irie R."/>
            <person name="Wakamatsu A."/>
            <person name="Hayashi K."/>
            <person name="Sato H."/>
            <person name="Nagai K."/>
            <person name="Kimura K."/>
            <person name="Makita H."/>
            <person name="Sekine M."/>
            <person name="Obayashi M."/>
            <person name="Nishi T."/>
            <person name="Shibahara T."/>
            <person name="Tanaka T."/>
            <person name="Ishii S."/>
            <person name="Yamamoto J."/>
            <person name="Saito K."/>
            <person name="Kawai Y."/>
            <person name="Isono Y."/>
            <person name="Nakamura Y."/>
            <person name="Nagahari K."/>
            <person name="Murakami K."/>
            <person name="Yasuda T."/>
            <person name="Iwayanagi T."/>
            <person name="Wagatsuma M."/>
            <person name="Shiratori A."/>
            <person name="Sudo H."/>
            <person name="Hosoiri T."/>
            <person name="Kaku Y."/>
            <person name="Kodaira H."/>
            <person name="Kondo H."/>
            <person name="Sugawara M."/>
            <person name="Takahashi M."/>
            <person name="Kanda K."/>
            <person name="Yokoi T."/>
            <person name="Furuya T."/>
            <person name="Kikkawa E."/>
            <person name="Omura Y."/>
            <person name="Abe K."/>
            <person name="Kamihara K."/>
            <person name="Katsuta N."/>
            <person name="Sato K."/>
            <person name="Tanikawa M."/>
            <person name="Yamazaki M."/>
            <person name="Ninomiya K."/>
            <person name="Ishibashi T."/>
            <person name="Yamashita H."/>
            <person name="Murakawa K."/>
            <person name="Fujimori K."/>
            <person name="Tanai H."/>
            <person name="Kimata M."/>
            <person name="Watanabe M."/>
            <person name="Hiraoka S."/>
            <person name="Chiba Y."/>
            <person name="Ishida S."/>
            <person name="Ono Y."/>
            <person name="Takiguchi S."/>
            <person name="Watanabe S."/>
            <person name="Yosida M."/>
            <person name="Hotuta T."/>
            <person name="Kusano J."/>
            <person name="Kanehori K."/>
            <person name="Takahashi-Fujii A."/>
            <person name="Hara H."/>
            <person name="Tanase T.-O."/>
            <person name="Nomura Y."/>
            <person name="Togiya S."/>
            <person name="Komai F."/>
            <person name="Hara R."/>
            <person name="Takeuchi K."/>
            <person name="Arita M."/>
            <person name="Imose N."/>
            <person name="Musashino K."/>
            <person name="Yuuki H."/>
            <person name="Oshima A."/>
            <person name="Sasaki N."/>
            <person name="Aotsuka S."/>
            <person name="Yoshikawa Y."/>
            <person name="Matsunawa H."/>
            <person name="Ichihara T."/>
            <person name="Shiohata N."/>
            <person name="Sano S."/>
            <person name="Moriya S."/>
            <person name="Momiyama H."/>
            <person name="Satoh N."/>
            <person name="Takami S."/>
            <person name="Terashima Y."/>
            <person name="Suzuki O."/>
            <person name="Nakagawa S."/>
            <person name="Senoh A."/>
            <person name="Mizoguchi H."/>
            <person name="Goto Y."/>
            <person name="Shimizu F."/>
            <person name="Wakebe H."/>
            <person name="Hishigaki H."/>
            <person name="Watanabe T."/>
            <person name="Sugiyama A."/>
            <person name="Takemoto M."/>
            <person name="Kawakami B."/>
            <person name="Yamazaki M."/>
            <person name="Watanabe K."/>
            <person name="Kumagai A."/>
            <person name="Itakura S."/>
            <person name="Fukuzumi Y."/>
            <person name="Fujimori Y."/>
            <person name="Komiyama M."/>
            <person name="Tashiro H."/>
            <person name="Tanigami A."/>
            <person name="Fujiwara T."/>
            <person name="Ono T."/>
            <person name="Yamada K."/>
            <person name="Fujii Y."/>
            <person name="Ozaki K."/>
            <person name="Hirao M."/>
            <person name="Ohmori Y."/>
            <person name="Kawabata A."/>
            <person name="Hikiji T."/>
            <person name="Kobatake N."/>
            <person name="Inagaki H."/>
            <person name="Ikema Y."/>
            <person name="Okamoto S."/>
            <person name="Okitani R."/>
            <person name="Kawakami T."/>
            <person name="Noguchi S."/>
            <person name="Itoh T."/>
            <person name="Shigeta K."/>
            <person name="Senba T."/>
            <person name="Matsumura K."/>
            <person name="Nakajima Y."/>
            <person name="Mizuno T."/>
            <person name="Morinaga M."/>
            <person name="Sasaki M."/>
            <person name="Togashi T."/>
            <person name="Oyama M."/>
            <person name="Hata H."/>
            <person name="Watanabe M."/>
            <person name="Komatsu T."/>
            <person name="Mizushima-Sugano J."/>
            <person name="Satoh T."/>
            <person name="Shirai Y."/>
            <person name="Takahashi Y."/>
            <person name="Nakagawa K."/>
            <person name="Okumura K."/>
            <person name="Nagase T."/>
            <person name="Nomura N."/>
            <person name="Kikuchi H."/>
            <person name="Masuho Y."/>
            <person name="Yamashita R."/>
            <person name="Nakai K."/>
            <person name="Yada T."/>
            <person name="Nakamura Y."/>
            <person name="Ohara O."/>
            <person name="Isogai T."/>
            <person name="Sugano S."/>
        </authorList>
    </citation>
    <scope>NUCLEOTIDE SEQUENCE [LARGE SCALE MRNA] (ISOFORMS 1 AND 2)</scope>
    <scope>VARIANT VAL-423</scope>
    <source>
        <tissue>Amygdala</tissue>
        <tissue>Embryo</tissue>
        <tissue>Placenta</tissue>
    </source>
</reference>
<reference key="2">
    <citation type="journal article" date="2005" name="Nature">
        <title>Generation and annotation of the DNA sequences of human chromosomes 2 and 4.</title>
        <authorList>
            <person name="Hillier L.W."/>
            <person name="Graves T.A."/>
            <person name="Fulton R.S."/>
            <person name="Fulton L.A."/>
            <person name="Pepin K.H."/>
            <person name="Minx P."/>
            <person name="Wagner-McPherson C."/>
            <person name="Layman D."/>
            <person name="Wylie K."/>
            <person name="Sekhon M."/>
            <person name="Becker M.C."/>
            <person name="Fewell G.A."/>
            <person name="Delehaunty K.D."/>
            <person name="Miner T.L."/>
            <person name="Nash W.E."/>
            <person name="Kremitzki C."/>
            <person name="Oddy L."/>
            <person name="Du H."/>
            <person name="Sun H."/>
            <person name="Bradshaw-Cordum H."/>
            <person name="Ali J."/>
            <person name="Carter J."/>
            <person name="Cordes M."/>
            <person name="Harris A."/>
            <person name="Isak A."/>
            <person name="van Brunt A."/>
            <person name="Nguyen C."/>
            <person name="Du F."/>
            <person name="Courtney L."/>
            <person name="Kalicki J."/>
            <person name="Ozersky P."/>
            <person name="Abbott S."/>
            <person name="Armstrong J."/>
            <person name="Belter E.A."/>
            <person name="Caruso L."/>
            <person name="Cedroni M."/>
            <person name="Cotton M."/>
            <person name="Davidson T."/>
            <person name="Desai A."/>
            <person name="Elliott G."/>
            <person name="Erb T."/>
            <person name="Fronick C."/>
            <person name="Gaige T."/>
            <person name="Haakenson W."/>
            <person name="Haglund K."/>
            <person name="Holmes A."/>
            <person name="Harkins R."/>
            <person name="Kim K."/>
            <person name="Kruchowski S.S."/>
            <person name="Strong C.M."/>
            <person name="Grewal N."/>
            <person name="Goyea E."/>
            <person name="Hou S."/>
            <person name="Levy A."/>
            <person name="Martinka S."/>
            <person name="Mead K."/>
            <person name="McLellan M.D."/>
            <person name="Meyer R."/>
            <person name="Randall-Maher J."/>
            <person name="Tomlinson C."/>
            <person name="Dauphin-Kohlberg S."/>
            <person name="Kozlowicz-Reilly A."/>
            <person name="Shah N."/>
            <person name="Swearengen-Shahid S."/>
            <person name="Snider J."/>
            <person name="Strong J.T."/>
            <person name="Thompson J."/>
            <person name="Yoakum M."/>
            <person name="Leonard S."/>
            <person name="Pearman C."/>
            <person name="Trani L."/>
            <person name="Radionenko M."/>
            <person name="Waligorski J.E."/>
            <person name="Wang C."/>
            <person name="Rock S.M."/>
            <person name="Tin-Wollam A.-M."/>
            <person name="Maupin R."/>
            <person name="Latreille P."/>
            <person name="Wendl M.C."/>
            <person name="Yang S.-P."/>
            <person name="Pohl C."/>
            <person name="Wallis J.W."/>
            <person name="Spieth J."/>
            <person name="Bieri T.A."/>
            <person name="Berkowicz N."/>
            <person name="Nelson J.O."/>
            <person name="Osborne J."/>
            <person name="Ding L."/>
            <person name="Meyer R."/>
            <person name="Sabo A."/>
            <person name="Shotland Y."/>
            <person name="Sinha P."/>
            <person name="Wohldmann P.E."/>
            <person name="Cook L.L."/>
            <person name="Hickenbotham M.T."/>
            <person name="Eldred J."/>
            <person name="Williams D."/>
            <person name="Jones T.A."/>
            <person name="She X."/>
            <person name="Ciccarelli F.D."/>
            <person name="Izaurralde E."/>
            <person name="Taylor J."/>
            <person name="Schmutz J."/>
            <person name="Myers R.M."/>
            <person name="Cox D.R."/>
            <person name="Huang X."/>
            <person name="McPherson J.D."/>
            <person name="Mardis E.R."/>
            <person name="Clifton S.W."/>
            <person name="Warren W.C."/>
            <person name="Chinwalla A.T."/>
            <person name="Eddy S.R."/>
            <person name="Marra M.A."/>
            <person name="Ovcharenko I."/>
            <person name="Furey T.S."/>
            <person name="Miller W."/>
            <person name="Eichler E.E."/>
            <person name="Bork P."/>
            <person name="Suyama M."/>
            <person name="Torrents D."/>
            <person name="Waterston R.H."/>
            <person name="Wilson R.K."/>
        </authorList>
    </citation>
    <scope>NUCLEOTIDE SEQUENCE [LARGE SCALE GENOMIC DNA]</scope>
</reference>
<reference key="3">
    <citation type="submission" date="2005-09" db="EMBL/GenBank/DDBJ databases">
        <authorList>
            <person name="Mural R.J."/>
            <person name="Istrail S."/>
            <person name="Sutton G.G."/>
            <person name="Florea L."/>
            <person name="Halpern A.L."/>
            <person name="Mobarry C.M."/>
            <person name="Lippert R."/>
            <person name="Walenz B."/>
            <person name="Shatkay H."/>
            <person name="Dew I."/>
            <person name="Miller J.R."/>
            <person name="Flanigan M.J."/>
            <person name="Edwards N.J."/>
            <person name="Bolanos R."/>
            <person name="Fasulo D."/>
            <person name="Halldorsson B.V."/>
            <person name="Hannenhalli S."/>
            <person name="Turner R."/>
            <person name="Yooseph S."/>
            <person name="Lu F."/>
            <person name="Nusskern D.R."/>
            <person name="Shue B.C."/>
            <person name="Zheng X.H."/>
            <person name="Zhong F."/>
            <person name="Delcher A.L."/>
            <person name="Huson D.H."/>
            <person name="Kravitz S.A."/>
            <person name="Mouchard L."/>
            <person name="Reinert K."/>
            <person name="Remington K.A."/>
            <person name="Clark A.G."/>
            <person name="Waterman M.S."/>
            <person name="Eichler E.E."/>
            <person name="Adams M.D."/>
            <person name="Hunkapiller M.W."/>
            <person name="Myers E.W."/>
            <person name="Venter J.C."/>
        </authorList>
    </citation>
    <scope>NUCLEOTIDE SEQUENCE [LARGE SCALE GENOMIC DNA]</scope>
</reference>
<reference key="4">
    <citation type="journal article" date="2004" name="Genome Res.">
        <title>The status, quality, and expansion of the NIH full-length cDNA project: the Mammalian Gene Collection (MGC).</title>
        <authorList>
            <consortium name="The MGC Project Team"/>
        </authorList>
    </citation>
    <scope>NUCLEOTIDE SEQUENCE [LARGE SCALE MRNA] (ISOFORM 1)</scope>
    <source>
        <tissue>Testis</tissue>
    </source>
</reference>
<reference key="5">
    <citation type="journal article" date="2007" name="Traffic">
        <title>Integral and associated lysosomal membrane proteins.</title>
        <authorList>
            <person name="Schroeder B."/>
            <person name="Wrocklage C."/>
            <person name="Pan C."/>
            <person name="Jaeger R."/>
            <person name="Koesters B."/>
            <person name="Schaefer H."/>
            <person name="Elsaesser H.-P."/>
            <person name="Mann M."/>
            <person name="Hasilik A."/>
        </authorList>
    </citation>
    <scope>SUBCELLULAR LOCATION [LARGE SCALE ANALYSIS]</scope>
    <source>
        <tissue>Placenta</tissue>
    </source>
</reference>
<reference key="6">
    <citation type="journal article" date="2010" name="Traffic">
        <title>Lysosomal targeting of the CLN7 membrane glycoprotein and transport via the plasma membrane require a dileucine motif.</title>
        <authorList>
            <person name="Steenhuis P."/>
            <person name="Herder S."/>
            <person name="Gelis S."/>
            <person name="Braulke T."/>
            <person name="Storch S."/>
        </authorList>
    </citation>
    <scope>GLYCOSYLATION AT ASN-371 AND ASN-376</scope>
    <scope>DILEUCINE MOTIF</scope>
    <scope>SUBCELLULAR LOCATION</scope>
</reference>
<reference key="7">
    <citation type="journal article" date="2021" name="Sci. Adv.">
        <title>CLN7 is an organellar chloride channel regulating lysosomal function.</title>
        <authorList>
            <person name="Wang Y."/>
            <person name="Zeng W."/>
            <person name="Lin B."/>
            <person name="Yao Y."/>
            <person name="Li C."/>
            <person name="Hu W."/>
            <person name="Wu H."/>
            <person name="Huang J."/>
            <person name="Zhang M."/>
            <person name="Xue T."/>
            <person name="Ren D."/>
            <person name="Qu L."/>
            <person name="Cang C."/>
        </authorList>
    </citation>
    <scope>FUNCTION</scope>
    <scope>TRANSPORTER ACTIVITY</scope>
    <scope>ACTIVITY REGULATION</scope>
    <scope>SUBCELLULAR LOCATION</scope>
    <scope>TOPOLOGY</scope>
    <scope>DILEUCINE MOTIF</scope>
    <scope>MUTAGENESIS OF LEU-13; LEU-14; ARG-153; GLU-287 AND TYR-438</scope>
    <scope>CHARACTERIZATION OF VARIANTS CLN7 PRO-157; LYS-294; GLN-336; GLN-465 AND TRP-465</scope>
</reference>
<reference key="8">
    <citation type="journal article" date="2007" name="Am. J. Hum. Genet.">
        <title>The novel neuronal ceroid lipofuscinosis gene MFSD8 encodes a putative lysosomal transporter.</title>
        <authorList>
            <person name="Siintola E."/>
            <person name="Topcu M."/>
            <person name="Aula N."/>
            <person name="Lohi H."/>
            <person name="Minassian B.A."/>
            <person name="Paterson A.D."/>
            <person name="Liu X.-Q."/>
            <person name="Wilson C."/>
            <person name="Lahtinen U."/>
            <person name="Anttonen A.-K."/>
            <person name="Lehesjoki A.-E."/>
        </authorList>
    </citation>
    <scope>VARIANTS CLN7 ASP-310 AND ASP-429</scope>
    <scope>CHARACTERIZATION OF VARIANTS CLN7 ASP-310 AND ASP-429</scope>
    <scope>SUBCELLULAR LOCATION</scope>
    <scope>TISSUE SPECIFICITY</scope>
</reference>
<reference key="9">
    <citation type="journal article" date="2009" name="Brain">
        <title>Mutations in CLN7/MFSD8 are a common cause of variant late-infantile neuronal ceroid lipofuscinosis.</title>
        <authorList>
            <person name="Kousi M."/>
            <person name="Siintola E."/>
            <person name="Dvorakova L."/>
            <person name="Vlaskova H."/>
            <person name="Turnbull J."/>
            <person name="Topcu M."/>
            <person name="Yuksel D."/>
            <person name="Gokben S."/>
            <person name="Minassian B.A."/>
            <person name="Elleder M."/>
            <person name="Mole S.E."/>
            <person name="Lehesjoki A.-E."/>
        </authorList>
    </citation>
    <scope>VARIANTS CLN7 HIS-139; PRO-157; LYS-294; ASP-310 AND TRP-465</scope>
</reference>
<reference key="10">
    <citation type="journal article" date="2009" name="Hum. Mutat.">
        <title>Mutations in MFSD8/CLN7 are a frequent cause of variant-late infantile neuronal ceroid lipofuscinosis.</title>
        <authorList>
            <person name="Aiello C."/>
            <person name="Terracciano A."/>
            <person name="Simonati A."/>
            <person name="Discepoli G."/>
            <person name="Cannelli N."/>
            <person name="Claps D."/>
            <person name="Crow Y.J."/>
            <person name="Bianchi M."/>
            <person name="Kitzmuller C."/>
            <person name="Longo D."/>
            <person name="Tavoni A."/>
            <person name="Franzoni E."/>
            <person name="Tessa A."/>
            <person name="Veneselli E."/>
            <person name="Boldrini R."/>
            <person name="Filocamo M."/>
            <person name="Williams R.E."/>
            <person name="Bertini E.S."/>
            <person name="Biancheri R."/>
            <person name="Carrozzo R."/>
            <person name="Mole S.E."/>
            <person name="Santorelli F.M."/>
        </authorList>
    </citation>
    <scope>VARIANTS CLN7 ARG-52; LYS-294; ASP-310 AND LEU-447</scope>
</reference>
<reference key="11">
    <citation type="journal article" date="2009" name="Neurogenetics">
        <title>A novel mutation in the MFSD8 gene in late infantile neuronal ceroid lipofuscinosis.</title>
        <authorList>
            <person name="Stogmann E."/>
            <person name="El Tawil S."/>
            <person name="Wagenstaller J."/>
            <person name="Gaber A."/>
            <person name="Edris S."/>
            <person name="Abdelhady A."/>
            <person name="Assem-Hilger E."/>
            <person name="Leutmezer F."/>
            <person name="Bonelli S."/>
            <person name="Baumgartner C."/>
            <person name="Zimprich F."/>
            <person name="Strom T.M."/>
            <person name="Zimprich A."/>
        </authorList>
    </citation>
    <scope>VARIANT CLN7 CYS-121</scope>
</reference>
<reference key="12">
    <citation type="journal article" date="2009" name="Neurogenetics">
        <title>Neuronal ceroid lipofuscinosis caused by MFSD8 mutations: a common theme emerging.</title>
        <authorList>
            <person name="Aldahmesh M.A."/>
            <person name="Al-Hassnan Z.N."/>
            <person name="Aldosari M."/>
            <person name="Alkuraya F.S."/>
        </authorList>
    </citation>
    <scope>VARIANT CLN7 LEU-412</scope>
</reference>
<reference key="13">
    <citation type="journal article" date="2012" name="Epilepsia">
        <title>Targeted next generation sequencing as a diagnostic tool in epileptic disorders.</title>
        <authorList>
            <person name="Lemke J.R."/>
            <person name="Riesch E."/>
            <person name="Scheurenbrand T."/>
            <person name="Schubach M."/>
            <person name="Wilhelm C."/>
            <person name="Steiner I."/>
            <person name="Hansen J."/>
            <person name="Courage C."/>
            <person name="Gallati S."/>
            <person name="Buerki S."/>
            <person name="Strozzi S."/>
            <person name="Simonetti B.G."/>
            <person name="Grunt S."/>
            <person name="Steinlin M."/>
            <person name="Alber M."/>
            <person name="Wolff M."/>
            <person name="Klopstock T."/>
            <person name="Prott E.C."/>
            <person name="Lorenz R."/>
            <person name="Spaich C."/>
            <person name="Rona S."/>
            <person name="Lakshminarasimhan M."/>
            <person name="Kroell J."/>
            <person name="Dorn T."/>
            <person name="Kraemer G."/>
            <person name="Synofzik M."/>
            <person name="Becker F."/>
            <person name="Weber Y.G."/>
            <person name="Lerche H."/>
            <person name="Boehm D."/>
            <person name="Biskup S."/>
        </authorList>
    </citation>
    <scope>VARIANT CLN7 LYS-294</scope>
</reference>
<reference key="14">
    <citation type="journal article" date="2012" name="Hum. Mutat.">
        <title>Update of the mutation spectrum and clinical correlations of over 360 mutations in eight genes that underlie the neuronal ceroid lipofuscinoses.</title>
        <authorList>
            <person name="Kousi M."/>
            <person name="Lehesjoki A.E."/>
            <person name="Mole S.E."/>
        </authorList>
    </citation>
    <scope>VARIANTS CLN7 PRO-157; ASN-160; ILE-160; LYS-458; GLN-465 AND VAL-470</scope>
</reference>
<reference key="15">
    <citation type="journal article" date="2015" name="Ophthalmology">
        <title>Mutations in MFSD8, encoding a lysosomal membrane protein, are associated with nonsyndromic autosomal recessive macular dystrophy.</title>
        <authorList>
            <person name="Roosing S."/>
            <person name="van den Born L.I."/>
            <person name="Sangermano R."/>
            <person name="Banfi S."/>
            <person name="Koenekoop R.K."/>
            <person name="Zonneveld-Vrieling M.N."/>
            <person name="Klaver C.C."/>
            <person name="van Lith-Verhoeven J.J."/>
            <person name="Cremers F.P."/>
            <person name="den Hollander A.I."/>
            <person name="Hoyng C.B."/>
        </authorList>
    </citation>
    <scope>INVOLVEMENT IN CCMD</scope>
    <scope>VARIANT CCMD GLN-336</scope>
</reference>
<gene>
    <name evidence="16 20" type="primary">MFSD8</name>
    <name evidence="17" type="synonym">CLN7</name>
</gene>